<evidence type="ECO:0000255" key="1">
    <source>
        <dbReference type="HAMAP-Rule" id="MF_00636"/>
    </source>
</evidence>
<reference key="1">
    <citation type="journal article" date="2001" name="Lancet">
        <title>Whole genome sequencing of meticillin-resistant Staphylococcus aureus.</title>
        <authorList>
            <person name="Kuroda M."/>
            <person name="Ohta T."/>
            <person name="Uchiyama I."/>
            <person name="Baba T."/>
            <person name="Yuzawa H."/>
            <person name="Kobayashi I."/>
            <person name="Cui L."/>
            <person name="Oguchi A."/>
            <person name="Aoki K."/>
            <person name="Nagai Y."/>
            <person name="Lian J.-Q."/>
            <person name="Ito T."/>
            <person name="Kanamori M."/>
            <person name="Matsumaru H."/>
            <person name="Maruyama A."/>
            <person name="Murakami H."/>
            <person name="Hosoyama A."/>
            <person name="Mizutani-Ui Y."/>
            <person name="Takahashi N.K."/>
            <person name="Sawano T."/>
            <person name="Inoue R."/>
            <person name="Kaito C."/>
            <person name="Sekimizu K."/>
            <person name="Hirakawa H."/>
            <person name="Kuhara S."/>
            <person name="Goto S."/>
            <person name="Yabuzaki J."/>
            <person name="Kanehisa M."/>
            <person name="Yamashita A."/>
            <person name="Oshima K."/>
            <person name="Furuya K."/>
            <person name="Yoshino C."/>
            <person name="Shiba T."/>
            <person name="Hattori M."/>
            <person name="Ogasawara N."/>
            <person name="Hayashi H."/>
            <person name="Hiramatsu K."/>
        </authorList>
    </citation>
    <scope>NUCLEOTIDE SEQUENCE [LARGE SCALE GENOMIC DNA]</scope>
    <source>
        <strain>N315</strain>
    </source>
</reference>
<reference key="2">
    <citation type="submission" date="2007-10" db="UniProtKB">
        <title>Shotgun proteomic analysis of total and membrane protein extracts of S. aureus strain N315.</title>
        <authorList>
            <person name="Vaezzadeh A.R."/>
            <person name="Deshusses J."/>
            <person name="Lescuyer P."/>
            <person name="Hochstrasser D.F."/>
        </authorList>
    </citation>
    <scope>IDENTIFICATION BY MASS SPECTROMETRY [LARGE SCALE ANALYSIS]</scope>
    <source>
        <strain>N315</strain>
    </source>
</reference>
<organism>
    <name type="scientific">Staphylococcus aureus (strain N315)</name>
    <dbReference type="NCBI Taxonomy" id="158879"/>
    <lineage>
        <taxon>Bacteria</taxon>
        <taxon>Bacillati</taxon>
        <taxon>Bacillota</taxon>
        <taxon>Bacilli</taxon>
        <taxon>Bacillales</taxon>
        <taxon>Staphylococcaceae</taxon>
        <taxon>Staphylococcus</taxon>
    </lineage>
</organism>
<sequence>MDNNEKEKSKSELLVVTGLSGAGKSLVIQCLEDMGYFCVDNLPPVLLPKFVELMEQGNPSLRKVAIAIDLRGKELFNSLVAVVDKVKSESDVIIDVMFLEASTEKLISRYKETRRAHPLMEQGKRSLINAINDEREHLSQIRSIANFVIDTTKLSPKELKERIRRYYEDEEFETFTINVTSFGFKHGIQMDADLVFDVRFLPNPYYVVDLRPLTGLDKDVYNYVMKWKETEIFFEKLTDLLDFMIPGYKKEGKSQLVIAIGCTGGQHRSVALAERLGNYLNEVFEYNVYVHHRDAHIESGEKK</sequence>
<comment type="function">
    <text evidence="1">Displays ATPase and GTPase activities.</text>
</comment>
<comment type="similarity">
    <text evidence="1">Belongs to the RapZ-like family.</text>
</comment>
<name>Y720_STAAN</name>
<feature type="chain" id="PRO_0000107759" description="Nucleotide-binding protein SA0720">
    <location>
        <begin position="1"/>
        <end position="303"/>
    </location>
</feature>
<feature type="binding site" evidence="1">
    <location>
        <begin position="18"/>
        <end position="25"/>
    </location>
    <ligand>
        <name>ATP</name>
        <dbReference type="ChEBI" id="CHEBI:30616"/>
    </ligand>
</feature>
<feature type="binding site" evidence="1">
    <location>
        <begin position="69"/>
        <end position="72"/>
    </location>
    <ligand>
        <name>GTP</name>
        <dbReference type="ChEBI" id="CHEBI:37565"/>
    </ligand>
</feature>
<accession>P67109</accession>
<accession>Q99VL1</accession>
<dbReference type="EMBL" id="BA000018">
    <property type="protein sequence ID" value="BAB41953.1"/>
    <property type="molecule type" value="Genomic_DNA"/>
</dbReference>
<dbReference type="PIR" id="F89849">
    <property type="entry name" value="F89849"/>
</dbReference>
<dbReference type="SMR" id="P67109"/>
<dbReference type="EnsemblBacteria" id="BAB41953">
    <property type="protein sequence ID" value="BAB41953"/>
    <property type="gene ID" value="BAB41953"/>
</dbReference>
<dbReference type="KEGG" id="sau:SA0720"/>
<dbReference type="HOGENOM" id="CLU_059558_0_0_9"/>
<dbReference type="GO" id="GO:0005524">
    <property type="term" value="F:ATP binding"/>
    <property type="evidence" value="ECO:0007669"/>
    <property type="project" value="UniProtKB-UniRule"/>
</dbReference>
<dbReference type="GO" id="GO:0005525">
    <property type="term" value="F:GTP binding"/>
    <property type="evidence" value="ECO:0007669"/>
    <property type="project" value="UniProtKB-UniRule"/>
</dbReference>
<dbReference type="Gene3D" id="3.40.50.300">
    <property type="entry name" value="P-loop containing nucleotide triphosphate hydrolases"/>
    <property type="match status" value="1"/>
</dbReference>
<dbReference type="HAMAP" id="MF_00636">
    <property type="entry name" value="RapZ_like"/>
    <property type="match status" value="1"/>
</dbReference>
<dbReference type="InterPro" id="IPR027417">
    <property type="entry name" value="P-loop_NTPase"/>
</dbReference>
<dbReference type="InterPro" id="IPR005337">
    <property type="entry name" value="RapZ-like"/>
</dbReference>
<dbReference type="InterPro" id="IPR053930">
    <property type="entry name" value="RapZ-like_N"/>
</dbReference>
<dbReference type="InterPro" id="IPR053931">
    <property type="entry name" value="RapZ_C"/>
</dbReference>
<dbReference type="NCBIfam" id="NF003828">
    <property type="entry name" value="PRK05416.1"/>
    <property type="match status" value="1"/>
</dbReference>
<dbReference type="PANTHER" id="PTHR30448">
    <property type="entry name" value="RNASE ADAPTER PROTEIN RAPZ"/>
    <property type="match status" value="1"/>
</dbReference>
<dbReference type="PANTHER" id="PTHR30448:SF0">
    <property type="entry name" value="RNASE ADAPTER PROTEIN RAPZ"/>
    <property type="match status" value="1"/>
</dbReference>
<dbReference type="Pfam" id="PF22740">
    <property type="entry name" value="PapZ_C"/>
    <property type="match status" value="1"/>
</dbReference>
<dbReference type="Pfam" id="PF03668">
    <property type="entry name" value="RapZ-like_N"/>
    <property type="match status" value="1"/>
</dbReference>
<dbReference type="PIRSF" id="PIRSF005052">
    <property type="entry name" value="P-loopkin"/>
    <property type="match status" value="1"/>
</dbReference>
<dbReference type="SUPFAM" id="SSF52540">
    <property type="entry name" value="P-loop containing nucleoside triphosphate hydrolases"/>
    <property type="match status" value="1"/>
</dbReference>
<keyword id="KW-0067">ATP-binding</keyword>
<keyword id="KW-0342">GTP-binding</keyword>
<keyword id="KW-0547">Nucleotide-binding</keyword>
<proteinExistence type="evidence at protein level"/>
<gene>
    <name type="ordered locus">SA0720</name>
</gene>
<protein>
    <recommendedName>
        <fullName evidence="1">Nucleotide-binding protein SA0720</fullName>
    </recommendedName>
</protein>